<keyword id="KW-1003">Cell membrane</keyword>
<keyword id="KW-0134">Cell wall</keyword>
<keyword id="KW-0445">Lipid transport</keyword>
<keyword id="KW-0449">Lipoprotein</keyword>
<keyword id="KW-0472">Membrane</keyword>
<keyword id="KW-0564">Palmitate</keyword>
<keyword id="KW-1185">Reference proteome</keyword>
<keyword id="KW-0964">Secreted</keyword>
<keyword id="KW-0732">Signal</keyword>
<keyword id="KW-0813">Transport</keyword>
<organism>
    <name type="scientific">Mycobacterium bovis (strain ATCC BAA-935 / AF2122/97)</name>
    <dbReference type="NCBI Taxonomy" id="233413"/>
    <lineage>
        <taxon>Bacteria</taxon>
        <taxon>Bacillati</taxon>
        <taxon>Actinomycetota</taxon>
        <taxon>Actinomycetes</taxon>
        <taxon>Mycobacteriales</taxon>
        <taxon>Mycobacteriaceae</taxon>
        <taxon>Mycobacterium</taxon>
        <taxon>Mycobacterium tuberculosis complex</taxon>
    </lineage>
</organism>
<gene>
    <name type="primary">lppX</name>
    <name type="ordered locus">BQ2027_MB2970C</name>
</gene>
<accession>P65307</accession>
<accession>A0A1R3Y2N3</accession>
<accession>P96286</accession>
<accession>X2BLZ5</accession>
<proteinExistence type="inferred from homology"/>
<sequence length="233" mass="24140">MNDGKRAVTSAVLVVLGACLALWLSGCSSPKPDAEEQGVPVSPTASDPALLAEIRQSLDATKGLTSVHVAVRTTGKVDSLLGITSADVDVRANPLAAKGVCTYNDEQGVPFRVQGDNISVKLFDDWSNLGSISELSTSRVLDPAAGVTQLLSGVTNLQAQGTEVIDGISTTKITGTIPASSVKMLDPGAKSARPATVWIAQDGSHHLVRASIDLGSGSIQLTQSKWNEPVNVD</sequence>
<reference key="1">
    <citation type="journal article" date="2003" name="Proc. Natl. Acad. Sci. U.S.A.">
        <title>The complete genome sequence of Mycobacterium bovis.</title>
        <authorList>
            <person name="Garnier T."/>
            <person name="Eiglmeier K."/>
            <person name="Camus J.-C."/>
            <person name="Medina N."/>
            <person name="Mansoor H."/>
            <person name="Pryor M."/>
            <person name="Duthoy S."/>
            <person name="Grondin S."/>
            <person name="Lacroix C."/>
            <person name="Monsempe C."/>
            <person name="Simon S."/>
            <person name="Harris B."/>
            <person name="Atkin R."/>
            <person name="Doggett J."/>
            <person name="Mayes R."/>
            <person name="Keating L."/>
            <person name="Wheeler P.R."/>
            <person name="Parkhill J."/>
            <person name="Barrell B.G."/>
            <person name="Cole S.T."/>
            <person name="Gordon S.V."/>
            <person name="Hewinson R.G."/>
        </authorList>
    </citation>
    <scope>NUCLEOTIDE SEQUENCE [LARGE SCALE GENOMIC DNA]</scope>
    <source>
        <strain>ATCC BAA-935 / AF2122/97</strain>
    </source>
</reference>
<reference key="2">
    <citation type="journal article" date="2017" name="Genome Announc.">
        <title>Updated reference genome sequence and annotation of Mycobacterium bovis AF2122/97.</title>
        <authorList>
            <person name="Malone K.M."/>
            <person name="Farrell D."/>
            <person name="Stuber T.P."/>
            <person name="Schubert O.T."/>
            <person name="Aebersold R."/>
            <person name="Robbe-Austerman S."/>
            <person name="Gordon S.V."/>
        </authorList>
    </citation>
    <scope>NUCLEOTIDE SEQUENCE [LARGE SCALE GENOMIC DNA]</scope>
    <scope>GENOME REANNOTATION</scope>
    <source>
        <strain>ATCC BAA-935 / AF2122/97</strain>
    </source>
</reference>
<dbReference type="EMBL" id="LT708304">
    <property type="protein sequence ID" value="SIU01591.1"/>
    <property type="molecule type" value="Genomic_DNA"/>
</dbReference>
<dbReference type="RefSeq" id="NP_856615.1">
    <property type="nucleotide sequence ID" value="NC_002945.3"/>
</dbReference>
<dbReference type="RefSeq" id="WP_003414872.1">
    <property type="nucleotide sequence ID" value="NC_002945.4"/>
</dbReference>
<dbReference type="SMR" id="P65307"/>
<dbReference type="KEGG" id="mbo:BQ2027_MB2970C"/>
<dbReference type="PATRIC" id="fig|233413.5.peg.3262"/>
<dbReference type="Proteomes" id="UP000001419">
    <property type="component" value="Chromosome"/>
</dbReference>
<dbReference type="GO" id="GO:0009986">
    <property type="term" value="C:cell surface"/>
    <property type="evidence" value="ECO:0007669"/>
    <property type="project" value="UniProtKB-SubCell"/>
</dbReference>
<dbReference type="GO" id="GO:0005576">
    <property type="term" value="C:extracellular region"/>
    <property type="evidence" value="ECO:0007669"/>
    <property type="project" value="UniProtKB-SubCell"/>
</dbReference>
<dbReference type="GO" id="GO:0005886">
    <property type="term" value="C:plasma membrane"/>
    <property type="evidence" value="ECO:0007669"/>
    <property type="project" value="UniProtKB-SubCell"/>
</dbReference>
<dbReference type="GO" id="GO:0006869">
    <property type="term" value="P:lipid transport"/>
    <property type="evidence" value="ECO:0007669"/>
    <property type="project" value="UniProtKB-KW"/>
</dbReference>
<dbReference type="CDD" id="cd16334">
    <property type="entry name" value="LppX-like"/>
    <property type="match status" value="1"/>
</dbReference>
<dbReference type="Gene3D" id="2.50.20.20">
    <property type="match status" value="1"/>
</dbReference>
<dbReference type="InterPro" id="IPR029046">
    <property type="entry name" value="LolA/LolB/LppX"/>
</dbReference>
<dbReference type="InterPro" id="IPR009830">
    <property type="entry name" value="LppX/LprAFG"/>
</dbReference>
<dbReference type="Pfam" id="PF07161">
    <property type="entry name" value="LppX_LprAFG"/>
    <property type="match status" value="1"/>
</dbReference>
<dbReference type="SUPFAM" id="SSF89392">
    <property type="entry name" value="Prokaryotic lipoproteins and lipoprotein localization factors"/>
    <property type="match status" value="1"/>
</dbReference>
<dbReference type="PROSITE" id="PS51257">
    <property type="entry name" value="PROKAR_LIPOPROTEIN"/>
    <property type="match status" value="1"/>
</dbReference>
<comment type="function">
    <text evidence="1">Might be involved in translocating phthiocerol dimycocerosates (PDIM) from the cell membrane to the outer membrane; PDIM forms part of the cell wall.</text>
</comment>
<comment type="subcellular location">
    <subcellularLocation>
        <location evidence="2">Cell membrane</location>
        <topology evidence="2">Lipid-anchor</topology>
    </subcellularLocation>
    <subcellularLocation>
        <location evidence="1">Cell surface</location>
    </subcellularLocation>
    <subcellularLocation>
        <location evidence="1">Secreted</location>
        <location evidence="1">Cell wall</location>
    </subcellularLocation>
    <subcellularLocation>
        <location evidence="1">Secreted</location>
    </subcellularLocation>
</comment>
<comment type="domain">
    <text evidence="1">Forms a U-shaped beta-half-barrel with a large hydrophobic cavity which is large enough to hold a single phthiocerol dimycocerosate (PDIM) molecule.</text>
</comment>
<comment type="PTM">
    <text evidence="1">Modified by Lgt on Cys-27 with an S-linked diacylglycerol with a mixture of C16 and C19 fatty acids (palmitic and tuberculostearic acid), signal peptide is removed by LspA, modified by Lnt with an amide-linked mixture of C16 and C19 fatty acids.</text>
</comment>
<comment type="similarity">
    <text evidence="3">Belongs to the LppX/LprAFG lipoprotein family.</text>
</comment>
<protein>
    <recommendedName>
        <fullName>Putative phthiocerol dimycocerosate transporter LppX</fullName>
    </recommendedName>
    <alternativeName>
        <fullName>Lipoprotein LppX</fullName>
    </alternativeName>
</protein>
<evidence type="ECO:0000250" key="1">
    <source>
        <dbReference type="UniProtKB" id="P9WK65"/>
    </source>
</evidence>
<evidence type="ECO:0000255" key="2">
    <source>
        <dbReference type="PROSITE-ProRule" id="PRU00303"/>
    </source>
</evidence>
<evidence type="ECO:0000305" key="3"/>
<name>LPPX_MYCBO</name>
<feature type="signal peptide" evidence="2">
    <location>
        <begin position="1"/>
        <end position="26"/>
    </location>
</feature>
<feature type="chain" id="PRO_0000018119" description="Putative phthiocerol dimycocerosate transporter LppX">
    <location>
        <begin position="27"/>
        <end position="233"/>
    </location>
</feature>
<feature type="lipid moiety-binding region" description="N-palmitoyl cysteine" evidence="2">
    <location>
        <position position="27"/>
    </location>
</feature>
<feature type="lipid moiety-binding region" description="S-diacylglycerol cysteine" evidence="2">
    <location>
        <position position="27"/>
    </location>
</feature>